<feature type="transit peptide" description="Mitochondrion">
    <location>
        <begin position="1"/>
        <end position="36"/>
    </location>
</feature>
<feature type="chain" id="PRO_5000220612" description="Protein fmp52, mitochondrial">
    <location>
        <begin position="37"/>
        <end position="234"/>
    </location>
</feature>
<sequence>MANVALLGCTGMVGSHILTHLLGNSSVARIDTISRRTPQPATAAPQEKLTTFVSDDSSKWASQLSSLTPTPDIFISAFGTTRGAAGGFENQYKIEHGLNVEMARAARDAGTKVYVLISSTGADKNSSFGYPRMKGEIEEEVKAMGFDRTIILRPGLISGERQESRPAEAVMRGFAGLVGKIHSGLKDGWAQDADVIAKAAVNAGVKALNGEVPAGSEKVWVMYGKDIIQYGKGQ</sequence>
<protein>
    <recommendedName>
        <fullName>Protein fmp52, mitochondrial</fullName>
    </recommendedName>
</protein>
<dbReference type="EMBL" id="AM270241">
    <property type="protein sequence ID" value="CAK96965.1"/>
    <property type="molecule type" value="Genomic_DNA"/>
</dbReference>
<dbReference type="RefSeq" id="XP_001394646.1">
    <property type="nucleotide sequence ID" value="XM_001394609.2"/>
</dbReference>
<dbReference type="SMR" id="A2QWW3"/>
<dbReference type="EnsemblFungi" id="CAK96965">
    <property type="protein sequence ID" value="CAK96965"/>
    <property type="gene ID" value="An11g06680"/>
</dbReference>
<dbReference type="GeneID" id="4984892"/>
<dbReference type="KEGG" id="ang:An11g06680"/>
<dbReference type="VEuPathDB" id="FungiDB:An11g06680"/>
<dbReference type="HOGENOM" id="CLU_071330_3_0_1"/>
<dbReference type="Proteomes" id="UP000006706">
    <property type="component" value="Chromosome 7R"/>
</dbReference>
<dbReference type="GO" id="GO:0005741">
    <property type="term" value="C:mitochondrial outer membrane"/>
    <property type="evidence" value="ECO:0007669"/>
    <property type="project" value="UniProtKB-SubCell"/>
</dbReference>
<dbReference type="GO" id="GO:0051170">
    <property type="term" value="P:import into nucleus"/>
    <property type="evidence" value="ECO:0007669"/>
    <property type="project" value="TreeGrafter"/>
</dbReference>
<dbReference type="FunFam" id="3.40.50.720:FF:000366">
    <property type="entry name" value="Protein FMP52, mitochondrial"/>
    <property type="match status" value="1"/>
</dbReference>
<dbReference type="Gene3D" id="3.40.50.720">
    <property type="entry name" value="NAD(P)-binding Rossmann-like Domain"/>
    <property type="match status" value="1"/>
</dbReference>
<dbReference type="InterPro" id="IPR016040">
    <property type="entry name" value="NAD(P)-bd_dom"/>
</dbReference>
<dbReference type="InterPro" id="IPR036291">
    <property type="entry name" value="NAD(P)-bd_dom_sf"/>
</dbReference>
<dbReference type="PANTHER" id="PTHR14097">
    <property type="entry name" value="OXIDOREDUCTASE HTATIP2"/>
    <property type="match status" value="1"/>
</dbReference>
<dbReference type="PANTHER" id="PTHR14097:SF7">
    <property type="entry name" value="OXIDOREDUCTASE HTATIP2"/>
    <property type="match status" value="1"/>
</dbReference>
<dbReference type="Pfam" id="PF13460">
    <property type="entry name" value="NAD_binding_10"/>
    <property type="match status" value="1"/>
</dbReference>
<dbReference type="SUPFAM" id="SSF51735">
    <property type="entry name" value="NAD(P)-binding Rossmann-fold domains"/>
    <property type="match status" value="1"/>
</dbReference>
<gene>
    <name type="primary">fmp52</name>
    <name type="ORF">An11g06680</name>
</gene>
<accession>A2QWW3</accession>
<reference key="1">
    <citation type="journal article" date="2007" name="Nat. Biotechnol.">
        <title>Genome sequencing and analysis of the versatile cell factory Aspergillus niger CBS 513.88.</title>
        <authorList>
            <person name="Pel H.J."/>
            <person name="de Winde J.H."/>
            <person name="Archer D.B."/>
            <person name="Dyer P.S."/>
            <person name="Hofmann G."/>
            <person name="Schaap P.J."/>
            <person name="Turner G."/>
            <person name="de Vries R.P."/>
            <person name="Albang R."/>
            <person name="Albermann K."/>
            <person name="Andersen M.R."/>
            <person name="Bendtsen J.D."/>
            <person name="Benen J.A.E."/>
            <person name="van den Berg M."/>
            <person name="Breestraat S."/>
            <person name="Caddick M.X."/>
            <person name="Contreras R."/>
            <person name="Cornell M."/>
            <person name="Coutinho P.M."/>
            <person name="Danchin E.G.J."/>
            <person name="Debets A.J.M."/>
            <person name="Dekker P."/>
            <person name="van Dijck P.W.M."/>
            <person name="van Dijk A."/>
            <person name="Dijkhuizen L."/>
            <person name="Driessen A.J.M."/>
            <person name="d'Enfert C."/>
            <person name="Geysens S."/>
            <person name="Goosen C."/>
            <person name="Groot G.S.P."/>
            <person name="de Groot P.W.J."/>
            <person name="Guillemette T."/>
            <person name="Henrissat B."/>
            <person name="Herweijer M."/>
            <person name="van den Hombergh J.P.T.W."/>
            <person name="van den Hondel C.A.M.J.J."/>
            <person name="van der Heijden R.T.J.M."/>
            <person name="van der Kaaij R.M."/>
            <person name="Klis F.M."/>
            <person name="Kools H.J."/>
            <person name="Kubicek C.P."/>
            <person name="van Kuyk P.A."/>
            <person name="Lauber J."/>
            <person name="Lu X."/>
            <person name="van der Maarel M.J.E.C."/>
            <person name="Meulenberg R."/>
            <person name="Menke H."/>
            <person name="Mortimer M.A."/>
            <person name="Nielsen J."/>
            <person name="Oliver S.G."/>
            <person name="Olsthoorn M."/>
            <person name="Pal K."/>
            <person name="van Peij N.N.M.E."/>
            <person name="Ram A.F.J."/>
            <person name="Rinas U."/>
            <person name="Roubos J.A."/>
            <person name="Sagt C.M.J."/>
            <person name="Schmoll M."/>
            <person name="Sun J."/>
            <person name="Ussery D."/>
            <person name="Varga J."/>
            <person name="Vervecken W."/>
            <person name="van de Vondervoort P.J.J."/>
            <person name="Wedler H."/>
            <person name="Woesten H.A.B."/>
            <person name="Zeng A.-P."/>
            <person name="van Ooyen A.J.J."/>
            <person name="Visser J."/>
            <person name="Stam H."/>
        </authorList>
    </citation>
    <scope>NUCLEOTIDE SEQUENCE [LARGE SCALE GENOMIC DNA]</scope>
    <source>
        <strain>ATCC MYA-4892 / CBS 513.88 / FGSC A1513</strain>
    </source>
</reference>
<evidence type="ECO:0000250" key="1"/>
<evidence type="ECO:0000305" key="2"/>
<name>FMP52_ASPNC</name>
<keyword id="KW-0472">Membrane</keyword>
<keyword id="KW-0496">Mitochondrion</keyword>
<keyword id="KW-1000">Mitochondrion outer membrane</keyword>
<keyword id="KW-1185">Reference proteome</keyword>
<keyword id="KW-0809">Transit peptide</keyword>
<proteinExistence type="inferred from homology"/>
<comment type="subcellular location">
    <subcellularLocation>
        <location evidence="1">Mitochondrion outer membrane</location>
        <topology evidence="1">Peripheral membrane protein</topology>
    </subcellularLocation>
</comment>
<comment type="similarity">
    <text evidence="2">Belongs to the FMP52 family.</text>
</comment>
<organism>
    <name type="scientific">Aspergillus niger (strain ATCC MYA-4892 / CBS 513.88 / FGSC A1513)</name>
    <dbReference type="NCBI Taxonomy" id="425011"/>
    <lineage>
        <taxon>Eukaryota</taxon>
        <taxon>Fungi</taxon>
        <taxon>Dikarya</taxon>
        <taxon>Ascomycota</taxon>
        <taxon>Pezizomycotina</taxon>
        <taxon>Eurotiomycetes</taxon>
        <taxon>Eurotiomycetidae</taxon>
        <taxon>Eurotiales</taxon>
        <taxon>Aspergillaceae</taxon>
        <taxon>Aspergillus</taxon>
        <taxon>Aspergillus subgen. Circumdati</taxon>
    </lineage>
</organism>